<gene>
    <name type="primary">AMT2-1</name>
    <name type="ordered locus">Os05g0468700</name>
    <name type="ordered locus">LOC_Os05g39240</name>
    <name type="ORF">OJ1058_C01.9</name>
</gene>
<comment type="function">
    <text evidence="3">Involved in ammonium transport.</text>
</comment>
<comment type="subcellular location">
    <subcellularLocation>
        <location evidence="5">Cell membrane</location>
        <topology evidence="5">Multi-pass membrane protein</topology>
    </subcellularLocation>
</comment>
<comment type="tissue specificity">
    <text evidence="3">Expressed in roots and leaf blades and sheaths.</text>
</comment>
<comment type="induction">
    <text evidence="3">Not induced by ammonium supply in roots.</text>
</comment>
<comment type="similarity">
    <text evidence="4">Belongs to the ammonia transporter channel (TC 1.A.11.2) family.</text>
</comment>
<proteinExistence type="evidence at transcript level"/>
<protein>
    <recommendedName>
        <fullName>Ammonium transporter 2 member 1</fullName>
        <shortName>OsAMT2;1</shortName>
    </recommendedName>
</protein>
<feature type="chain" id="PRO_0000385647" description="Ammonium transporter 2 member 1">
    <location>
        <begin position="1"/>
        <end position="486"/>
    </location>
</feature>
<feature type="transmembrane region" description="Helical" evidence="1">
    <location>
        <begin position="29"/>
        <end position="49"/>
    </location>
</feature>
<feature type="transmembrane region" description="Helical" evidence="1">
    <location>
        <begin position="57"/>
        <end position="77"/>
    </location>
</feature>
<feature type="transmembrane region" description="Helical" evidence="1">
    <location>
        <begin position="127"/>
        <end position="147"/>
    </location>
</feature>
<feature type="transmembrane region" description="Helical" evidence="1">
    <location>
        <begin position="161"/>
        <end position="181"/>
    </location>
</feature>
<feature type="transmembrane region" description="Helical" evidence="1">
    <location>
        <begin position="190"/>
        <end position="210"/>
    </location>
</feature>
<feature type="transmembrane region" description="Helical" evidence="1">
    <location>
        <begin position="225"/>
        <end position="245"/>
    </location>
</feature>
<feature type="transmembrane region" description="Helical" evidence="1">
    <location>
        <begin position="252"/>
        <end position="272"/>
    </location>
</feature>
<feature type="transmembrane region" description="Helical" evidence="1">
    <location>
        <begin position="285"/>
        <end position="305"/>
    </location>
</feature>
<feature type="transmembrane region" description="Helical" evidence="1">
    <location>
        <begin position="309"/>
        <end position="329"/>
    </location>
</feature>
<feature type="transmembrane region" description="Helical" evidence="1">
    <location>
        <begin position="343"/>
        <end position="363"/>
    </location>
</feature>
<feature type="transmembrane region" description="Helical" evidence="1">
    <location>
        <begin position="399"/>
        <end position="419"/>
    </location>
</feature>
<feature type="region of interest" description="Disordered" evidence="2">
    <location>
        <begin position="454"/>
        <end position="473"/>
    </location>
</feature>
<feature type="compositionally biased region" description="Basic and acidic residues" evidence="2">
    <location>
        <begin position="454"/>
        <end position="470"/>
    </location>
</feature>
<organism>
    <name type="scientific">Oryza sativa subsp. japonica</name>
    <name type="common">Rice</name>
    <dbReference type="NCBI Taxonomy" id="39947"/>
    <lineage>
        <taxon>Eukaryota</taxon>
        <taxon>Viridiplantae</taxon>
        <taxon>Streptophyta</taxon>
        <taxon>Embryophyta</taxon>
        <taxon>Tracheophyta</taxon>
        <taxon>Spermatophyta</taxon>
        <taxon>Magnoliopsida</taxon>
        <taxon>Liliopsida</taxon>
        <taxon>Poales</taxon>
        <taxon>Poaceae</taxon>
        <taxon>BOP clade</taxon>
        <taxon>Oryzoideae</taxon>
        <taxon>Oryzeae</taxon>
        <taxon>Oryzinae</taxon>
        <taxon>Oryza</taxon>
        <taxon>Oryza sativa</taxon>
    </lineage>
</organism>
<sequence>MAAAGAYSASLPAVPDWLNKGDNAWQLTASTLVGIQSMPGLVVLYGSIVKKKWAVNSAFMALYAYASSLLVWVLVGFRMAFGDQLLPFWGKAGVALTQSYLVGRATLPATAHGAIPRTEPFYPEATLVLFQFEFAAITLVLLAGSVLGRMNIKAWMAFTPLWLLLSYTVGAFSLWGGGFLYRWGVIDYSGGYVIHLSSGIAGFTAAYWVGPRLKSDRERFSPNNILLMIAGGGLLWMGWAGFNGGAPYAANIAASVAVLNTNVCAATSLLMWTCLDVIFFRKPSVIGAVQGMMTGLVCITPGAGLVQTWAAVVMGIFAGSVPWFTMMILHKKSALLMKVDDTLAVFHTHAVAGLLGGILTGLLATPELFSLESTVPGLRGAFYGGGIKQIGKQLGGAAFVIAWNLVVTTAILLGIGLFIPLRMPDEQLMIGDDAAHGEEAYALWGDGEKFDATRHDLSRGGGGGDRDGPAGERLSALGARGVTIQL</sequence>
<accession>Q84KJ7</accession>
<accession>A0A0P0WNK2</accession>
<accession>Q84K95</accession>
<evidence type="ECO:0000255" key="1"/>
<evidence type="ECO:0000256" key="2">
    <source>
        <dbReference type="SAM" id="MobiDB-lite"/>
    </source>
</evidence>
<evidence type="ECO:0000269" key="3">
    <source>
    </source>
</evidence>
<evidence type="ECO:0000305" key="4"/>
<evidence type="ECO:0000305" key="5">
    <source>
    </source>
</evidence>
<reference key="1">
    <citation type="journal article" date="2003" name="Plant Cell Physiol.">
        <title>Constitutive expression of a novel-type ammonium transporter OsAMT2 in rice plants.</title>
        <authorList>
            <person name="Suenaga A."/>
            <person name="Moriya K."/>
            <person name="Sonoda Y."/>
            <person name="Ikeda A."/>
            <person name="von Wiren N."/>
            <person name="Hayakawa T."/>
            <person name="Yamaguchi J."/>
            <person name="Yamaya T."/>
        </authorList>
    </citation>
    <scope>NUCLEOTIDE SEQUENCE [GENOMIC DNA / MRNA]</scope>
    <scope>FUNCTION</scope>
    <scope>SUBCELLULAR LOCATION</scope>
    <scope>TISSUE SPECIFICITY</scope>
    <scope>INDUCTION</scope>
    <source>
        <strain>cv. Sasanishiki</strain>
        <tissue>Root</tissue>
    </source>
</reference>
<reference key="2">
    <citation type="journal article" date="2005" name="Mol. Genet. Genomics">
        <title>A fine physical map of the rice chromosome 5.</title>
        <authorList>
            <person name="Cheng C.-H."/>
            <person name="Chung M.C."/>
            <person name="Liu S.-M."/>
            <person name="Chen S.-K."/>
            <person name="Kao F.Y."/>
            <person name="Lin S.-J."/>
            <person name="Hsiao S.-H."/>
            <person name="Tseng I.C."/>
            <person name="Hsing Y.-I.C."/>
            <person name="Wu H.-P."/>
            <person name="Chen C.-S."/>
            <person name="Shaw J.-F."/>
            <person name="Wu J."/>
            <person name="Matsumoto T."/>
            <person name="Sasaki T."/>
            <person name="Chen H.-C."/>
            <person name="Chow T.-Y."/>
        </authorList>
    </citation>
    <scope>NUCLEOTIDE SEQUENCE [LARGE SCALE GENOMIC DNA]</scope>
    <source>
        <strain>cv. Nipponbare</strain>
    </source>
</reference>
<reference key="3">
    <citation type="journal article" date="2005" name="Nature">
        <title>The map-based sequence of the rice genome.</title>
        <authorList>
            <consortium name="International rice genome sequencing project (IRGSP)"/>
        </authorList>
    </citation>
    <scope>NUCLEOTIDE SEQUENCE [LARGE SCALE GENOMIC DNA]</scope>
    <source>
        <strain>cv. Nipponbare</strain>
    </source>
</reference>
<reference key="4">
    <citation type="journal article" date="2008" name="Nucleic Acids Res.">
        <title>The rice annotation project database (RAP-DB): 2008 update.</title>
        <authorList>
            <consortium name="The rice annotation project (RAP)"/>
        </authorList>
    </citation>
    <scope>GENOME REANNOTATION</scope>
    <source>
        <strain>cv. Nipponbare</strain>
    </source>
</reference>
<reference key="5">
    <citation type="journal article" date="2013" name="Rice">
        <title>Improvement of the Oryza sativa Nipponbare reference genome using next generation sequence and optical map data.</title>
        <authorList>
            <person name="Kawahara Y."/>
            <person name="de la Bastide M."/>
            <person name="Hamilton J.P."/>
            <person name="Kanamori H."/>
            <person name="McCombie W.R."/>
            <person name="Ouyang S."/>
            <person name="Schwartz D.C."/>
            <person name="Tanaka T."/>
            <person name="Wu J."/>
            <person name="Zhou S."/>
            <person name="Childs K.L."/>
            <person name="Davidson R.M."/>
            <person name="Lin H."/>
            <person name="Quesada-Ocampo L."/>
            <person name="Vaillancourt B."/>
            <person name="Sakai H."/>
            <person name="Lee S.S."/>
            <person name="Kim J."/>
            <person name="Numa H."/>
            <person name="Itoh T."/>
            <person name="Buell C.R."/>
            <person name="Matsumoto T."/>
        </authorList>
    </citation>
    <scope>GENOME REANNOTATION</scope>
    <source>
        <strain>cv. Nipponbare</strain>
    </source>
</reference>
<reference key="6">
    <citation type="journal article" date="2003" name="Science">
        <title>Collection, mapping, and annotation of over 28,000 cDNA clones from japonica rice.</title>
        <authorList>
            <consortium name="The rice full-length cDNA consortium"/>
        </authorList>
    </citation>
    <scope>NUCLEOTIDE SEQUENCE [LARGE SCALE MRNA]</scope>
    <source>
        <strain>cv. Nipponbare</strain>
    </source>
</reference>
<dbReference type="EMBL" id="AB051864">
    <property type="protein sequence ID" value="BAB87832.1"/>
    <property type="molecule type" value="mRNA"/>
</dbReference>
<dbReference type="EMBL" id="AB083581">
    <property type="protein sequence ID" value="BAC65231.1"/>
    <property type="molecule type" value="Genomic_DNA"/>
</dbReference>
<dbReference type="EMBL" id="AC112159">
    <property type="protein sequence ID" value="AAT47008.1"/>
    <property type="molecule type" value="Genomic_DNA"/>
</dbReference>
<dbReference type="EMBL" id="AP008211">
    <property type="protein sequence ID" value="BAF17715.1"/>
    <property type="molecule type" value="Genomic_DNA"/>
</dbReference>
<dbReference type="EMBL" id="AP014961">
    <property type="protein sequence ID" value="BAS94471.1"/>
    <property type="molecule type" value="Genomic_DNA"/>
</dbReference>
<dbReference type="EMBL" id="AK065288">
    <property type="protein sequence ID" value="BAG89450.1"/>
    <property type="molecule type" value="mRNA"/>
</dbReference>
<dbReference type="RefSeq" id="XP_015639562.1">
    <property type="nucleotide sequence ID" value="XM_015784076.1"/>
</dbReference>
<dbReference type="SMR" id="Q84KJ7"/>
<dbReference type="FunCoup" id="Q84KJ7">
    <property type="interactions" value="533"/>
</dbReference>
<dbReference type="STRING" id="39947.Q84KJ7"/>
<dbReference type="PaxDb" id="39947-Q84KJ7"/>
<dbReference type="EnsemblPlants" id="Os05t0468700-01">
    <property type="protein sequence ID" value="Os05t0468700-01"/>
    <property type="gene ID" value="Os05g0468700"/>
</dbReference>
<dbReference type="Gramene" id="Os05t0468700-01">
    <property type="protein sequence ID" value="Os05t0468700-01"/>
    <property type="gene ID" value="Os05g0468700"/>
</dbReference>
<dbReference type="KEGG" id="dosa:Os05g0468700"/>
<dbReference type="eggNOG" id="KOG0682">
    <property type="taxonomic scope" value="Eukaryota"/>
</dbReference>
<dbReference type="HOGENOM" id="CLU_000445_33_4_1"/>
<dbReference type="InParanoid" id="Q84KJ7"/>
<dbReference type="OMA" id="HTHMVAG"/>
<dbReference type="OrthoDB" id="534912at2759"/>
<dbReference type="BioCyc" id="MetaCyc:MONOMER-14094"/>
<dbReference type="Proteomes" id="UP000000763">
    <property type="component" value="Chromosome 5"/>
</dbReference>
<dbReference type="Proteomes" id="UP000059680">
    <property type="component" value="Chromosome 5"/>
</dbReference>
<dbReference type="GO" id="GO:0005886">
    <property type="term" value="C:plasma membrane"/>
    <property type="evidence" value="ECO:0000318"/>
    <property type="project" value="GO_Central"/>
</dbReference>
<dbReference type="GO" id="GO:0008519">
    <property type="term" value="F:ammonium channel activity"/>
    <property type="evidence" value="ECO:0000318"/>
    <property type="project" value="GO_Central"/>
</dbReference>
<dbReference type="GO" id="GO:0072488">
    <property type="term" value="P:ammonium transmembrane transport"/>
    <property type="evidence" value="ECO:0000316"/>
    <property type="project" value="UniProtKB"/>
</dbReference>
<dbReference type="FunFam" id="1.10.3430.10:FF:000005">
    <property type="entry name" value="Ammonium transporter"/>
    <property type="match status" value="1"/>
</dbReference>
<dbReference type="Gene3D" id="1.10.3430.10">
    <property type="entry name" value="Ammonium transporter AmtB like domains"/>
    <property type="match status" value="1"/>
</dbReference>
<dbReference type="InterPro" id="IPR029020">
    <property type="entry name" value="Ammonium/urea_transptr"/>
</dbReference>
<dbReference type="InterPro" id="IPR001905">
    <property type="entry name" value="Ammonium_transpt"/>
</dbReference>
<dbReference type="InterPro" id="IPR018047">
    <property type="entry name" value="Ammonium_transpt_CS"/>
</dbReference>
<dbReference type="InterPro" id="IPR024041">
    <property type="entry name" value="NH4_transpt_AmtB-like_dom"/>
</dbReference>
<dbReference type="InterPro" id="IPR002229">
    <property type="entry name" value="RhesusRHD"/>
</dbReference>
<dbReference type="NCBIfam" id="TIGR00836">
    <property type="entry name" value="amt"/>
    <property type="match status" value="1"/>
</dbReference>
<dbReference type="PANTHER" id="PTHR43029:SF41">
    <property type="entry name" value="AMMONIUM TRANSPORTER 2 MEMBER 1"/>
    <property type="match status" value="1"/>
</dbReference>
<dbReference type="PANTHER" id="PTHR43029">
    <property type="entry name" value="AMMONIUM TRANSPORTER MEP2"/>
    <property type="match status" value="1"/>
</dbReference>
<dbReference type="Pfam" id="PF00909">
    <property type="entry name" value="Ammonium_transp"/>
    <property type="match status" value="1"/>
</dbReference>
<dbReference type="PRINTS" id="PR00342">
    <property type="entry name" value="RHESUSRHD"/>
</dbReference>
<dbReference type="SUPFAM" id="SSF111352">
    <property type="entry name" value="Ammonium transporter"/>
    <property type="match status" value="1"/>
</dbReference>
<dbReference type="PROSITE" id="PS01219">
    <property type="entry name" value="AMMONIUM_TRANSP"/>
    <property type="match status" value="1"/>
</dbReference>
<name>AMT21_ORYSJ</name>
<keyword id="KW-0924">Ammonia transport</keyword>
<keyword id="KW-1003">Cell membrane</keyword>
<keyword id="KW-0472">Membrane</keyword>
<keyword id="KW-1185">Reference proteome</keyword>
<keyword id="KW-0812">Transmembrane</keyword>
<keyword id="KW-1133">Transmembrane helix</keyword>
<keyword id="KW-0813">Transport</keyword>